<sequence>MILVNVHAGNCDNTLKNFKKKLQRELYFRKMKEQRYYEPKSVKRVRKAQEAARRKRKFARKRMYED</sequence>
<name>RS21_RICBR</name>
<proteinExistence type="inferred from homology"/>
<accession>Q1RJC9</accession>
<feature type="chain" id="PRO_0000266754" description="Small ribosomal subunit protein bS21">
    <location>
        <begin position="1"/>
        <end position="66"/>
    </location>
</feature>
<feature type="region of interest" description="Disordered" evidence="2">
    <location>
        <begin position="47"/>
        <end position="66"/>
    </location>
</feature>
<feature type="compositionally biased region" description="Basic residues" evidence="2">
    <location>
        <begin position="53"/>
        <end position="66"/>
    </location>
</feature>
<gene>
    <name evidence="1" type="primary">rpsU</name>
    <name type="ordered locus">RBE_0454</name>
</gene>
<protein>
    <recommendedName>
        <fullName evidence="1">Small ribosomal subunit protein bS21</fullName>
    </recommendedName>
    <alternativeName>
        <fullName evidence="3">30S ribosomal protein S21</fullName>
    </alternativeName>
</protein>
<comment type="similarity">
    <text evidence="1">Belongs to the bacterial ribosomal protein bS21 family.</text>
</comment>
<keyword id="KW-0687">Ribonucleoprotein</keyword>
<keyword id="KW-0689">Ribosomal protein</keyword>
<organism>
    <name type="scientific">Rickettsia bellii (strain RML369-C)</name>
    <dbReference type="NCBI Taxonomy" id="336407"/>
    <lineage>
        <taxon>Bacteria</taxon>
        <taxon>Pseudomonadati</taxon>
        <taxon>Pseudomonadota</taxon>
        <taxon>Alphaproteobacteria</taxon>
        <taxon>Rickettsiales</taxon>
        <taxon>Rickettsiaceae</taxon>
        <taxon>Rickettsieae</taxon>
        <taxon>Rickettsia</taxon>
        <taxon>belli group</taxon>
    </lineage>
</organism>
<dbReference type="EMBL" id="CP000087">
    <property type="protein sequence ID" value="ABE04535.1"/>
    <property type="molecule type" value="Genomic_DNA"/>
</dbReference>
<dbReference type="RefSeq" id="WP_011477128.1">
    <property type="nucleotide sequence ID" value="NC_007940.1"/>
</dbReference>
<dbReference type="SMR" id="Q1RJC9"/>
<dbReference type="KEGG" id="rbe:RBE_0454"/>
<dbReference type="eggNOG" id="COG0828">
    <property type="taxonomic scope" value="Bacteria"/>
</dbReference>
<dbReference type="HOGENOM" id="CLU_159258_0_2_5"/>
<dbReference type="OrthoDB" id="9811907at2"/>
<dbReference type="Proteomes" id="UP000001951">
    <property type="component" value="Chromosome"/>
</dbReference>
<dbReference type="GO" id="GO:1990904">
    <property type="term" value="C:ribonucleoprotein complex"/>
    <property type="evidence" value="ECO:0007669"/>
    <property type="project" value="UniProtKB-KW"/>
</dbReference>
<dbReference type="GO" id="GO:0005840">
    <property type="term" value="C:ribosome"/>
    <property type="evidence" value="ECO:0007669"/>
    <property type="project" value="UniProtKB-KW"/>
</dbReference>
<dbReference type="GO" id="GO:0003735">
    <property type="term" value="F:structural constituent of ribosome"/>
    <property type="evidence" value="ECO:0007669"/>
    <property type="project" value="InterPro"/>
</dbReference>
<dbReference type="GO" id="GO:0006412">
    <property type="term" value="P:translation"/>
    <property type="evidence" value="ECO:0007669"/>
    <property type="project" value="UniProtKB-UniRule"/>
</dbReference>
<dbReference type="Gene3D" id="1.20.5.1150">
    <property type="entry name" value="Ribosomal protein S8"/>
    <property type="match status" value="1"/>
</dbReference>
<dbReference type="HAMAP" id="MF_00358">
    <property type="entry name" value="Ribosomal_bS21"/>
    <property type="match status" value="1"/>
</dbReference>
<dbReference type="InterPro" id="IPR001911">
    <property type="entry name" value="Ribosomal_bS21"/>
</dbReference>
<dbReference type="InterPro" id="IPR038380">
    <property type="entry name" value="Ribosomal_bS21_sf"/>
</dbReference>
<dbReference type="NCBIfam" id="TIGR00030">
    <property type="entry name" value="S21p"/>
    <property type="match status" value="1"/>
</dbReference>
<dbReference type="Pfam" id="PF01165">
    <property type="entry name" value="Ribosomal_S21"/>
    <property type="match status" value="1"/>
</dbReference>
<reference key="1">
    <citation type="journal article" date="2006" name="PLoS Genet.">
        <title>Genome sequence of Rickettsia bellii illuminates the role of amoebae in gene exchanges between intracellular pathogens.</title>
        <authorList>
            <person name="Ogata H."/>
            <person name="La Scola B."/>
            <person name="Audic S."/>
            <person name="Renesto P."/>
            <person name="Blanc G."/>
            <person name="Robert C."/>
            <person name="Fournier P.-E."/>
            <person name="Claverie J.-M."/>
            <person name="Raoult D."/>
        </authorList>
    </citation>
    <scope>NUCLEOTIDE SEQUENCE [LARGE SCALE GENOMIC DNA]</scope>
    <source>
        <strain>RML369-C</strain>
    </source>
</reference>
<evidence type="ECO:0000255" key="1">
    <source>
        <dbReference type="HAMAP-Rule" id="MF_00358"/>
    </source>
</evidence>
<evidence type="ECO:0000256" key="2">
    <source>
        <dbReference type="SAM" id="MobiDB-lite"/>
    </source>
</evidence>
<evidence type="ECO:0000305" key="3"/>